<sequence>MKGSSVPRFVDRVVIHTRAGSGGNGCASVHREKFKPLGGPDGGNGGRGGSIVFVVDPQVHTLLDFHFRPHLTAASGKHGMGNNRDGAAGADLEVKVPEGTVVLDENGRLLADLVGAGTRFEAAAGGRGGLGNAALASRVRKAPGFALLGEKGQSRDLTLELKTVADVGLVGFPSAGKSSLVSAISAAKPKIADYPFTTLVPNLGVVSAGEHAFTVADVPGLIPGASRGRGLGLDFLRHIERCAVLVHVVDCATAEPGRDPISDIDALETELACYTPTLQGDAALGDLAARPRAVVLNKIDVPEARELAEFVRDDIAQRGWPVFCVSTATRENLQPLIFGLSQMISDYNAARPVAVPRRPVIRPIPVDDSGFTVEPDGHGGFVVSGARPERWIDQTNFDNDEAVGYLADRLARLGVEEELLRLGARSGCAVTIGEMTFDWEPQTPAGEPVAMSGRGTDPRLDSNKRVGAAERKAARSRRREHGDG</sequence>
<reference key="1">
    <citation type="journal article" date="2002" name="J. Bacteriol.">
        <title>Whole-genome comparison of Mycobacterium tuberculosis clinical and laboratory strains.</title>
        <authorList>
            <person name="Fleischmann R.D."/>
            <person name="Alland D."/>
            <person name="Eisen J.A."/>
            <person name="Carpenter L."/>
            <person name="White O."/>
            <person name="Peterson J.D."/>
            <person name="DeBoy R.T."/>
            <person name="Dodson R.J."/>
            <person name="Gwinn M.L."/>
            <person name="Haft D.H."/>
            <person name="Hickey E.K."/>
            <person name="Kolonay J.F."/>
            <person name="Nelson W.C."/>
            <person name="Umayam L.A."/>
            <person name="Ermolaeva M.D."/>
            <person name="Salzberg S.L."/>
            <person name="Delcher A."/>
            <person name="Utterback T.R."/>
            <person name="Weidman J.F."/>
            <person name="Khouri H.M."/>
            <person name="Gill J."/>
            <person name="Mikula A."/>
            <person name="Bishai W."/>
            <person name="Jacobs W.R. Jr."/>
            <person name="Venter J.C."/>
            <person name="Fraser C.M."/>
        </authorList>
    </citation>
    <scope>NUCLEOTIDE SEQUENCE [LARGE SCALE GENOMIC DNA]</scope>
    <source>
        <strain>CDC 1551 / Oshkosh</strain>
    </source>
</reference>
<accession>P9WMT0</accession>
<accession>L0TCC8</accession>
<accession>P71909</accession>
<accession>Q7D750</accession>
<keyword id="KW-0963">Cytoplasm</keyword>
<keyword id="KW-0342">GTP-binding</keyword>
<keyword id="KW-0378">Hydrolase</keyword>
<keyword id="KW-0460">Magnesium</keyword>
<keyword id="KW-0479">Metal-binding</keyword>
<keyword id="KW-0547">Nucleotide-binding</keyword>
<keyword id="KW-1185">Reference proteome</keyword>
<gene>
    <name evidence="1" type="primary">obg</name>
    <name type="ordered locus">MT2516</name>
</gene>
<evidence type="ECO:0000255" key="1">
    <source>
        <dbReference type="HAMAP-Rule" id="MF_01454"/>
    </source>
</evidence>
<evidence type="ECO:0000255" key="2">
    <source>
        <dbReference type="PROSITE-ProRule" id="PRU01229"/>
    </source>
</evidence>
<evidence type="ECO:0000255" key="3">
    <source>
        <dbReference type="PROSITE-ProRule" id="PRU01231"/>
    </source>
</evidence>
<evidence type="ECO:0000256" key="4">
    <source>
        <dbReference type="SAM" id="MobiDB-lite"/>
    </source>
</evidence>
<proteinExistence type="inferred from homology"/>
<organism>
    <name type="scientific">Mycobacterium tuberculosis (strain CDC 1551 / Oshkosh)</name>
    <dbReference type="NCBI Taxonomy" id="83331"/>
    <lineage>
        <taxon>Bacteria</taxon>
        <taxon>Bacillati</taxon>
        <taxon>Actinomycetota</taxon>
        <taxon>Actinomycetes</taxon>
        <taxon>Mycobacteriales</taxon>
        <taxon>Mycobacteriaceae</taxon>
        <taxon>Mycobacterium</taxon>
        <taxon>Mycobacterium tuberculosis complex</taxon>
    </lineage>
</organism>
<comment type="function">
    <text evidence="1">An essential GTPase which binds GTP, GDP and possibly (p)ppGpp with moderate affinity, with high nucleotide exchange rates and a fairly low GTP hydrolysis rate. Plays a role in control of the cell cycle, stress response, ribosome biogenesis and in those bacteria that undergo differentiation, in morphogenesis control.</text>
</comment>
<comment type="cofactor">
    <cofactor evidence="1">
        <name>Mg(2+)</name>
        <dbReference type="ChEBI" id="CHEBI:18420"/>
    </cofactor>
</comment>
<comment type="subunit">
    <text evidence="1">Monomer.</text>
</comment>
<comment type="subcellular location">
    <subcellularLocation>
        <location evidence="1">Cytoplasm</location>
    </subcellularLocation>
</comment>
<comment type="similarity">
    <text evidence="1">Belongs to the TRAFAC class OBG-HflX-like GTPase superfamily. OBG GTPase family.</text>
</comment>
<dbReference type="EC" id="3.6.5.-" evidence="1"/>
<dbReference type="EMBL" id="AE000516">
    <property type="protein sequence ID" value="AAK46813.1"/>
    <property type="molecule type" value="Genomic_DNA"/>
</dbReference>
<dbReference type="PIR" id="F70680">
    <property type="entry name" value="F70680"/>
</dbReference>
<dbReference type="SMR" id="P9WMT0"/>
<dbReference type="KEGG" id="mtc:MT2516"/>
<dbReference type="HOGENOM" id="CLU_011747_2_1_11"/>
<dbReference type="Proteomes" id="UP000001020">
    <property type="component" value="Chromosome"/>
</dbReference>
<dbReference type="GO" id="GO:0005737">
    <property type="term" value="C:cytoplasm"/>
    <property type="evidence" value="ECO:0007669"/>
    <property type="project" value="UniProtKB-SubCell"/>
</dbReference>
<dbReference type="GO" id="GO:0005525">
    <property type="term" value="F:GTP binding"/>
    <property type="evidence" value="ECO:0007669"/>
    <property type="project" value="UniProtKB-UniRule"/>
</dbReference>
<dbReference type="GO" id="GO:0003924">
    <property type="term" value="F:GTPase activity"/>
    <property type="evidence" value="ECO:0007669"/>
    <property type="project" value="UniProtKB-UniRule"/>
</dbReference>
<dbReference type="GO" id="GO:0000287">
    <property type="term" value="F:magnesium ion binding"/>
    <property type="evidence" value="ECO:0007669"/>
    <property type="project" value="InterPro"/>
</dbReference>
<dbReference type="GO" id="GO:0042254">
    <property type="term" value="P:ribosome biogenesis"/>
    <property type="evidence" value="ECO:0007669"/>
    <property type="project" value="UniProtKB-UniRule"/>
</dbReference>
<dbReference type="CDD" id="cd01898">
    <property type="entry name" value="Obg"/>
    <property type="match status" value="1"/>
</dbReference>
<dbReference type="FunFam" id="2.70.210.12:FF:000001">
    <property type="entry name" value="GTPase Obg"/>
    <property type="match status" value="1"/>
</dbReference>
<dbReference type="FunFam" id="3.30.300.350:FF:000002">
    <property type="entry name" value="GTPase Obg"/>
    <property type="match status" value="1"/>
</dbReference>
<dbReference type="FunFam" id="3.40.50.300:FF:000515">
    <property type="entry name" value="GTPase Obg"/>
    <property type="match status" value="1"/>
</dbReference>
<dbReference type="Gene3D" id="3.30.300.350">
    <property type="entry name" value="GTP-binding protein OBG, C-terminal domain"/>
    <property type="match status" value="1"/>
</dbReference>
<dbReference type="Gene3D" id="2.70.210.12">
    <property type="entry name" value="GTP1/OBG domain"/>
    <property type="match status" value="1"/>
</dbReference>
<dbReference type="Gene3D" id="3.40.50.300">
    <property type="entry name" value="P-loop containing nucleotide triphosphate hydrolases"/>
    <property type="match status" value="1"/>
</dbReference>
<dbReference type="HAMAP" id="MF_01454">
    <property type="entry name" value="GTPase_Obg"/>
    <property type="match status" value="1"/>
</dbReference>
<dbReference type="InterPro" id="IPR031167">
    <property type="entry name" value="G_OBG"/>
</dbReference>
<dbReference type="InterPro" id="IPR006073">
    <property type="entry name" value="GTP-bd"/>
</dbReference>
<dbReference type="InterPro" id="IPR014100">
    <property type="entry name" value="GTP-bd_Obg/CgtA"/>
</dbReference>
<dbReference type="InterPro" id="IPR036346">
    <property type="entry name" value="GTP-bd_prot_GTP1/OBG_C_sf"/>
</dbReference>
<dbReference type="InterPro" id="IPR006074">
    <property type="entry name" value="GTP1-OBG_CS"/>
</dbReference>
<dbReference type="InterPro" id="IPR006169">
    <property type="entry name" value="GTP1_OBG_dom"/>
</dbReference>
<dbReference type="InterPro" id="IPR036726">
    <property type="entry name" value="GTP1_OBG_dom_sf"/>
</dbReference>
<dbReference type="InterPro" id="IPR045086">
    <property type="entry name" value="OBG_GTPase"/>
</dbReference>
<dbReference type="InterPro" id="IPR015349">
    <property type="entry name" value="OCT_dom"/>
</dbReference>
<dbReference type="InterPro" id="IPR027417">
    <property type="entry name" value="P-loop_NTPase"/>
</dbReference>
<dbReference type="NCBIfam" id="TIGR02729">
    <property type="entry name" value="Obg_CgtA"/>
    <property type="match status" value="1"/>
</dbReference>
<dbReference type="NCBIfam" id="TIGR03595">
    <property type="entry name" value="Obg_CgtA_exten"/>
    <property type="match status" value="1"/>
</dbReference>
<dbReference type="NCBIfam" id="NF008954">
    <property type="entry name" value="PRK12296.1"/>
    <property type="match status" value="1"/>
</dbReference>
<dbReference type="NCBIfam" id="NF008955">
    <property type="entry name" value="PRK12297.1"/>
    <property type="match status" value="1"/>
</dbReference>
<dbReference type="NCBIfam" id="NF008956">
    <property type="entry name" value="PRK12299.1"/>
    <property type="match status" value="1"/>
</dbReference>
<dbReference type="PANTHER" id="PTHR11702">
    <property type="entry name" value="DEVELOPMENTALLY REGULATED GTP-BINDING PROTEIN-RELATED"/>
    <property type="match status" value="1"/>
</dbReference>
<dbReference type="PANTHER" id="PTHR11702:SF31">
    <property type="entry name" value="MITOCHONDRIAL RIBOSOME-ASSOCIATED GTPASE 2"/>
    <property type="match status" value="1"/>
</dbReference>
<dbReference type="Pfam" id="PF09269">
    <property type="entry name" value="DUF1967"/>
    <property type="match status" value="1"/>
</dbReference>
<dbReference type="Pfam" id="PF01018">
    <property type="entry name" value="GTP1_OBG"/>
    <property type="match status" value="1"/>
</dbReference>
<dbReference type="Pfam" id="PF01926">
    <property type="entry name" value="MMR_HSR1"/>
    <property type="match status" value="1"/>
</dbReference>
<dbReference type="PRINTS" id="PR00326">
    <property type="entry name" value="GTP1OBG"/>
</dbReference>
<dbReference type="SUPFAM" id="SSF102741">
    <property type="entry name" value="Obg GTP-binding protein C-terminal domain"/>
    <property type="match status" value="1"/>
</dbReference>
<dbReference type="SUPFAM" id="SSF82051">
    <property type="entry name" value="Obg GTP-binding protein N-terminal domain"/>
    <property type="match status" value="1"/>
</dbReference>
<dbReference type="SUPFAM" id="SSF52540">
    <property type="entry name" value="P-loop containing nucleoside triphosphate hydrolases"/>
    <property type="match status" value="1"/>
</dbReference>
<dbReference type="PROSITE" id="PS51710">
    <property type="entry name" value="G_OBG"/>
    <property type="match status" value="1"/>
</dbReference>
<dbReference type="PROSITE" id="PS00905">
    <property type="entry name" value="GTP1_OBG"/>
    <property type="match status" value="1"/>
</dbReference>
<dbReference type="PROSITE" id="PS51883">
    <property type="entry name" value="OBG"/>
    <property type="match status" value="1"/>
</dbReference>
<dbReference type="PROSITE" id="PS51881">
    <property type="entry name" value="OCT"/>
    <property type="match status" value="1"/>
</dbReference>
<name>OBG_MYCTO</name>
<protein>
    <recommendedName>
        <fullName evidence="1">GTPase Obg</fullName>
        <ecNumber evidence="1">3.6.5.-</ecNumber>
    </recommendedName>
    <alternativeName>
        <fullName evidence="1">GTP-binding protein Obg</fullName>
    </alternativeName>
</protein>
<feature type="chain" id="PRO_0000427248" description="GTPase Obg">
    <location>
        <begin position="1"/>
        <end position="484"/>
    </location>
</feature>
<feature type="domain" description="Obg" evidence="3">
    <location>
        <begin position="7"/>
        <end position="164"/>
    </location>
</feature>
<feature type="domain" description="OBG-type G" evidence="1">
    <location>
        <begin position="165"/>
        <end position="345"/>
    </location>
</feature>
<feature type="domain" description="OCT" evidence="2">
    <location>
        <begin position="363"/>
        <end position="441"/>
    </location>
</feature>
<feature type="region of interest" description="Disordered" evidence="4">
    <location>
        <begin position="21"/>
        <end position="43"/>
    </location>
</feature>
<feature type="region of interest" description="Disordered" evidence="4">
    <location>
        <begin position="439"/>
        <end position="484"/>
    </location>
</feature>
<feature type="compositionally biased region" description="Basic and acidic residues" evidence="4">
    <location>
        <begin position="456"/>
        <end position="473"/>
    </location>
</feature>
<feature type="compositionally biased region" description="Basic residues" evidence="4">
    <location>
        <begin position="474"/>
        <end position="484"/>
    </location>
</feature>
<feature type="binding site" evidence="1">
    <location>
        <begin position="171"/>
        <end position="178"/>
    </location>
    <ligand>
        <name>GTP</name>
        <dbReference type="ChEBI" id="CHEBI:37565"/>
    </ligand>
</feature>
<feature type="binding site" evidence="1">
    <location>
        <position position="178"/>
    </location>
    <ligand>
        <name>Mg(2+)</name>
        <dbReference type="ChEBI" id="CHEBI:18420"/>
    </ligand>
</feature>
<feature type="binding site" evidence="1">
    <location>
        <begin position="196"/>
        <end position="200"/>
    </location>
    <ligand>
        <name>GTP</name>
        <dbReference type="ChEBI" id="CHEBI:37565"/>
    </ligand>
</feature>
<feature type="binding site" evidence="1">
    <location>
        <position position="198"/>
    </location>
    <ligand>
        <name>Mg(2+)</name>
        <dbReference type="ChEBI" id="CHEBI:18420"/>
    </ligand>
</feature>
<feature type="binding site" evidence="1">
    <location>
        <begin position="217"/>
        <end position="220"/>
    </location>
    <ligand>
        <name>GTP</name>
        <dbReference type="ChEBI" id="CHEBI:37565"/>
    </ligand>
</feature>
<feature type="binding site" evidence="1">
    <location>
        <begin position="297"/>
        <end position="300"/>
    </location>
    <ligand>
        <name>GTP</name>
        <dbReference type="ChEBI" id="CHEBI:37565"/>
    </ligand>
</feature>
<feature type="binding site" evidence="1">
    <location>
        <begin position="326"/>
        <end position="328"/>
    </location>
    <ligand>
        <name>GTP</name>
        <dbReference type="ChEBI" id="CHEBI:37565"/>
    </ligand>
</feature>